<proteinExistence type="evidence at protein level"/>
<accession>P19503</accession>
<feature type="signal peptide" evidence="2">
    <location>
        <begin position="1"/>
        <end position="22"/>
    </location>
</feature>
<feature type="chain" id="PRO_0000085306" description="Envelope glycoprotein gp160">
    <location>
        <begin position="23"/>
        <end position="889"/>
    </location>
</feature>
<feature type="chain" id="PRO_0000239517" description="Surface protein gp120" evidence="1">
    <location>
        <begin position="23"/>
        <end position="535"/>
    </location>
</feature>
<feature type="chain" id="PRO_0000239518" description="Transmembrane protein gp41" evidence="1">
    <location>
        <begin position="536"/>
        <end position="889"/>
    </location>
</feature>
<feature type="topological domain" description="Extracellular" evidence="2">
    <location>
        <begin position="23"/>
        <end position="704"/>
    </location>
</feature>
<feature type="transmembrane region" description="Helical" evidence="2">
    <location>
        <begin position="705"/>
        <end position="725"/>
    </location>
</feature>
<feature type="topological domain" description="Cytoplasmic" evidence="2">
    <location>
        <begin position="726"/>
        <end position="889"/>
    </location>
</feature>
<feature type="region of interest" description="V1">
    <location>
        <begin position="113"/>
        <end position="174"/>
    </location>
</feature>
<feature type="region of interest" description="Disordered" evidence="3">
    <location>
        <begin position="120"/>
        <end position="145"/>
    </location>
</feature>
<feature type="region of interest" description="V2">
    <location>
        <begin position="175"/>
        <end position="217"/>
    </location>
</feature>
<feature type="region of interest" description="V3">
    <location>
        <begin position="317"/>
        <end position="349"/>
    </location>
</feature>
<feature type="region of interest" description="V4">
    <location>
        <begin position="408"/>
        <end position="442"/>
    </location>
</feature>
<feature type="region of interest" description="V5">
    <location>
        <begin position="485"/>
        <end position="492"/>
    </location>
</feature>
<feature type="region of interest" description="Fusion peptide" evidence="2">
    <location>
        <begin position="536"/>
        <end position="556"/>
    </location>
</feature>
<feature type="region of interest" description="Immunosuppression" evidence="1">
    <location>
        <begin position="599"/>
        <end position="615"/>
    </location>
</feature>
<feature type="region of interest" description="MPER; binding to GalCer" evidence="1">
    <location>
        <begin position="681"/>
        <end position="702"/>
    </location>
</feature>
<feature type="coiled-coil region" evidence="2">
    <location>
        <begin position="648"/>
        <end position="675"/>
    </location>
</feature>
<feature type="short sequence motif" description="YXXV motif; contains endocytosis signal" evidence="1">
    <location>
        <begin position="731"/>
        <end position="734"/>
    </location>
</feature>
<feature type="short sequence motif" description="Di-leucine internalization motif" evidence="1">
    <location>
        <begin position="888"/>
        <end position="889"/>
    </location>
</feature>
<feature type="compositionally biased region" description="Low complexity" evidence="3">
    <location>
        <begin position="126"/>
        <end position="145"/>
    </location>
</feature>
<feature type="site" description="Cleavage; by host furin" evidence="2">
    <location>
        <begin position="535"/>
        <end position="536"/>
    </location>
</feature>
<feature type="lipid moiety-binding region" description="S-palmitoyl cysteine; by host" evidence="1">
    <location>
        <position position="797"/>
    </location>
</feature>
<feature type="glycosylation site" description="N-linked (GlcNAc...) asparagine; by host" evidence="2">
    <location>
        <position position="37"/>
    </location>
</feature>
<feature type="glycosylation site" description="N-linked (GlcNAc...) asparagine; by host" evidence="2">
    <location>
        <position position="70"/>
    </location>
</feature>
<feature type="glycosylation site" description="N-linked (GlcNAc...) asparagine; by host" evidence="2">
    <location>
        <position position="114"/>
    </location>
</feature>
<feature type="glycosylation site" description="N-linked (GlcNAc...) asparagine; by host" evidence="2">
    <location>
        <position position="153"/>
    </location>
</feature>
<feature type="glycosylation site" description="N-linked (GlcNAc...) asparagine; by host" evidence="2">
    <location>
        <position position="163"/>
    </location>
</feature>
<feature type="glycosylation site" description="N-linked (GlcNAc...) asparagine; by host" evidence="2">
    <location>
        <position position="178"/>
    </location>
</feature>
<feature type="glycosylation site" description="N-linked (GlcNAc...) asparagine; by host" evidence="2">
    <location>
        <position position="191"/>
    </location>
</feature>
<feature type="glycosylation site" description="N-linked (GlcNAc...) asparagine; by host" evidence="2">
    <location>
        <position position="206"/>
    </location>
</feature>
<feature type="glycosylation site" description="N-linked (GlcNAc...) asparagine; by host" evidence="2">
    <location>
        <position position="218"/>
    </location>
</feature>
<feature type="glycosylation site" description="N-linked (GlcNAc...) asparagine; by host" evidence="2">
    <location>
        <position position="250"/>
    </location>
</feature>
<feature type="glycosylation site" description="N-linked (GlcNAc...) asparagine; by host" evidence="2">
    <location>
        <position position="253"/>
    </location>
</feature>
<feature type="glycosylation site" description="N-linked (GlcNAc...) asparagine; by host" evidence="2">
    <location>
        <position position="260"/>
    </location>
</feature>
<feature type="glycosylation site" description="N-linked (GlcNAc...) asparagine; by host" evidence="2">
    <location>
        <position position="284"/>
    </location>
</feature>
<feature type="glycosylation site" description="N-linked (GlcNAc...) asparagine; by host" evidence="2">
    <location>
        <position position="290"/>
    </location>
</feature>
<feature type="glycosylation site" description="N-linked (GlcNAc...) asparagine; by host" evidence="2">
    <location>
        <position position="301"/>
    </location>
</feature>
<feature type="glycosylation site" description="N-linked (GlcNAc...) asparagine; by host" evidence="2">
    <location>
        <position position="312"/>
    </location>
</feature>
<feature type="glycosylation site" description="N-linked (GlcNAc...) asparagine; by host" evidence="2">
    <location>
        <position position="322"/>
    </location>
</feature>
<feature type="glycosylation site" description="N-linked (GlcNAc...) asparagine; by host" evidence="2">
    <location>
        <position position="377"/>
    </location>
</feature>
<feature type="glycosylation site" description="N-linked (GlcNAc...) asparagine; by host" evidence="2">
    <location>
        <position position="422"/>
    </location>
</feature>
<feature type="glycosylation site" description="N-linked (GlcNAc...) asparagine; by host" evidence="2">
    <location>
        <position position="470"/>
    </location>
</feature>
<feature type="glycosylation site" description="N-linked (GlcNAc...) asparagine; by host" evidence="2">
    <location>
        <position position="486"/>
    </location>
</feature>
<feature type="glycosylation site" description="N-linked (GlcNAc...) asparagine; by host" evidence="2">
    <location>
        <position position="489"/>
    </location>
</feature>
<feature type="glycosylation site" description="N-linked (GlcNAc...) asparagine; by host" evidence="2">
    <location>
        <position position="635"/>
    </location>
</feature>
<feature type="glycosylation site" description="N-linked (GlcNAc...) asparagine; by host" evidence="2">
    <location>
        <position position="644"/>
    </location>
</feature>
<feature type="glycosylation site" description="N-linked (GlcNAc...) asparagine; by host" evidence="2">
    <location>
        <position position="660"/>
    </location>
</feature>
<feature type="disulfide bond" evidence="1">
    <location>
        <begin position="44"/>
        <end position="57"/>
    </location>
</feature>
<feature type="disulfide bond" evidence="1">
    <location>
        <begin position="101"/>
        <end position="226"/>
    </location>
</feature>
<feature type="disulfide bond" evidence="1">
    <location>
        <begin position="108"/>
        <end position="217"/>
    </location>
</feature>
<feature type="disulfide bond" evidence="1">
    <location>
        <begin position="113"/>
        <end position="175"/>
    </location>
</feature>
<feature type="disulfide bond" evidence="1">
    <location>
        <begin position="239"/>
        <end position="269"/>
    </location>
</feature>
<feature type="disulfide bond" evidence="1">
    <location>
        <begin position="249"/>
        <end position="261"/>
    </location>
</feature>
<feature type="disulfide bond" evidence="1">
    <location>
        <begin position="317"/>
        <end position="350"/>
    </location>
</feature>
<feature type="disulfide bond" evidence="1">
    <location>
        <begin position="401"/>
        <end position="469"/>
    </location>
</feature>
<feature type="disulfide bond" evidence="1">
    <location>
        <begin position="408"/>
        <end position="442"/>
    </location>
</feature>
<gene>
    <name type="primary">env</name>
</gene>
<organism>
    <name type="scientific">Simian immunodeficiency virus (isolate PBj14/BCL-3)</name>
    <name type="common">SIV-sm</name>
    <name type="synonym">Simian immunodeficiency virus sooty mangabey monkey</name>
    <dbReference type="NCBI Taxonomy" id="11738"/>
    <lineage>
        <taxon>Viruses</taxon>
        <taxon>Riboviria</taxon>
        <taxon>Pararnavirae</taxon>
        <taxon>Artverviricota</taxon>
        <taxon>Revtraviricetes</taxon>
        <taxon>Ortervirales</taxon>
        <taxon>Retroviridae</taxon>
        <taxon>Orthoretrovirinae</taxon>
        <taxon>Lentivirus</taxon>
        <taxon>Simian immunodeficiency virus</taxon>
    </lineage>
</organism>
<reference key="1">
    <citation type="journal article" date="1990" name="Nature">
        <title>Sequence analysis and acute pathogenicity of molecularly cloned SIVSMM-PBj14.</title>
        <authorList>
            <person name="Dewhurst S."/>
            <person name="Embretson J.E."/>
            <person name="Anderson D.C."/>
            <person name="Mullins J.I."/>
            <person name="Fultz P.N."/>
        </authorList>
    </citation>
    <scope>NUCLEOTIDE SEQUENCE [GENOMIC RNA]</scope>
</reference>
<reference key="2">
    <citation type="journal article" date="1992" name="AIDS Res. Hum. Retroviruses">
        <title>Molecular clones from a non-acutely pathogenic derivative of SIVsmmPBj14: characterization and comparison to acutely pathogenic clones.</title>
        <authorList>
            <person name="Dewhurst S."/>
            <person name="Embretson J.E."/>
            <person name="Fultz P.N."/>
            <person name="Mullins J.I."/>
        </authorList>
    </citation>
    <scope>NUCLEOTIDE SEQUENCE [GENOMIC RNA]</scope>
</reference>
<keyword id="KW-0002">3D-structure</keyword>
<keyword id="KW-0053">Apoptosis</keyword>
<keyword id="KW-0165">Cleavage on pair of basic residues</keyword>
<keyword id="KW-0175">Coiled coil</keyword>
<keyword id="KW-1015">Disulfide bond</keyword>
<keyword id="KW-1168">Fusion of virus membrane with host membrane</keyword>
<keyword id="KW-0325">Glycoprotein</keyword>
<keyword id="KW-1032">Host cell membrane</keyword>
<keyword id="KW-1039">Host endosome</keyword>
<keyword id="KW-1043">Host membrane</keyword>
<keyword id="KW-0945">Host-virus interaction</keyword>
<keyword id="KW-0449">Lipoprotein</keyword>
<keyword id="KW-0472">Membrane</keyword>
<keyword id="KW-0564">Palmitate</keyword>
<keyword id="KW-0732">Signal</keyword>
<keyword id="KW-0812">Transmembrane</keyword>
<keyword id="KW-1133">Transmembrane helix</keyword>
<keyword id="KW-1161">Viral attachment to host cell</keyword>
<keyword id="KW-0261">Viral envelope protein</keyword>
<keyword id="KW-1162">Viral penetration into host cytoplasm</keyword>
<keyword id="KW-0946">Virion</keyword>
<keyword id="KW-1160">Virus entry into host cell</keyword>
<evidence type="ECO:0000250" key="1"/>
<evidence type="ECO:0000255" key="2"/>
<evidence type="ECO:0000256" key="3">
    <source>
        <dbReference type="SAM" id="MobiDB-lite"/>
    </source>
</evidence>
<evidence type="ECO:0000305" key="4"/>
<protein>
    <recommendedName>
        <fullName>Envelope glycoprotein gp160</fullName>
    </recommendedName>
    <alternativeName>
        <fullName>Env polyprotein</fullName>
    </alternativeName>
    <component>
        <recommendedName>
            <fullName>Surface protein gp120</fullName>
            <shortName>SU</shortName>
        </recommendedName>
        <alternativeName>
            <fullName>Glycoprotein 120</fullName>
            <shortName>gp120</shortName>
        </alternativeName>
    </component>
    <component>
        <recommendedName>
            <fullName>Transmembrane protein gp41</fullName>
            <shortName>TM</shortName>
        </recommendedName>
        <alternativeName>
            <fullName>Glycoprotein 32</fullName>
            <shortName>gp32</shortName>
        </alternativeName>
    </component>
</protein>
<organismHost>
    <name type="scientific">Cercopithecidae</name>
    <name type="common">Old World monkeys</name>
    <dbReference type="NCBI Taxonomy" id="9527"/>
</organismHost>
<comment type="function">
    <text evidence="1">The surface protein gp120 (SU) attaches the virus to the host lymphoid cell by binding to the primary receptor CD4. This interaction induces a structural rearrangement creating a high affinity binding site for a chemokine coreceptor like CCR5. This peculiar 2 stage receptor-interaction strategy allows gp120 to maintain the highly conserved coreceptor-binding site in a cryptic conformation, protected from neutralizing antibodies. These changes are transmitted to the transmembrane protein gp41 and are thought to activate its fusogenic potential by unmasking its fusion peptide (By similarity).</text>
</comment>
<comment type="function">
    <text evidence="1">Surface protein gp120 (SU) may target the virus to gut-associated lymphoid tissue (GALT) by binding host ITGA4/ITGB7 (alpha-4/beta-7 integrins), a complex that mediates T-cell migration to the GALT. Interaction between gp120 and ITGA4/ITGB7 would allow the virus to enter GALT early in the infection, infecting and killing most of GALT's resting CD4+ T-cells. This T-cell depletion is believed to be the major insult to the host immune system leading to AIDS (By similarity).</text>
</comment>
<comment type="function">
    <text evidence="1">The surface protein gp120 is a ligand for CD209/DC-SIGN and CLEC4M/DC-SIGNR, which are respectively found on dendritic cells (DCs), and on endothelial cells of liver sinusoids and lymph node sinuses. These interactions allow capture of viral particles at mucosal surfaces by these cells and subsequent transmission to permissive cells. DCs are professional antigen presenting cells, critical for host immunity by inducing specific immune responses against a broad variety of pathogens. They act as sentinels in various tissues where they take up antigen, process it, and present it to T-cells following migration to lymphoid organs. SIV subverts the migration properties of dendritic cells to gain access to CD4+ T-cells in lymph nodes. Virus transmission to permissive T-cells occurs either in trans (without DCs infection, through viral capture and transmission), or in cis (following DCs productive infection, through the usual CD4-gp120 interaction), thereby inducing a robust infection. In trans infection, bound virions remain infectious over days and it is proposed that they are not degraded, but protected in non-lysosomal acidic organelles within the DCs close to the cell membrane thus contributing to the viral infectious potential during DCs' migration from the periphery to the lymphoid tissues. On arrival at lymphoid tissues, intact virions recycle back to DCs' cell surface allowing virus transmission to CD4+ T-cells. Virion capture also seems to lead to MHC-II-restricted viral antigen presentation, and probably to the activation of SIV-specific CD4+ cells (By similarity).</text>
</comment>
<comment type="function">
    <text evidence="1">The transmembrane protein gp41 (TM) acts as a class I viral fusion protein. Under the current model, the protein has at least 3 conformational states: pre-fusion native state, pre-hairpin intermediate state, and post-fusion hairpin state. During fusion of viral and target intracellular membranes, the coiled coil regions (heptad repeats) assume a trimer-of-hairpins structure, positioning the fusion peptide in close proximity to the C-terminal region of the ectodomain. The formation of this structure appears to drive apposition and subsequent fusion of viral and target cell membranes. Complete fusion occurs in host cell endosomes. The virus undergoes clathrin-dependent internalization long before endosomal fusion, thus minimizing the surface exposure of conserved viral epitopes during fusion and reducing the efficacy of inhibitors targeting these epitopes. Membranes fusion leads to delivery of the nucleocapsid into the cytoplasm (By similarity).</text>
</comment>
<comment type="function">
    <text evidence="1">The envelope glycoprotein gp160 precursor down-modulates cell surface CD4 antigen by interacting with it in the endoplasmic reticulum and blocking its transport to the cell surface.</text>
</comment>
<comment type="function">
    <text evidence="1">The gp120-gp41 heterodimer allows rapid transcytosis of the virus through CD4 negative cells such as simple epithelial monolayers of the intestinal, rectal and endocervical epithelial barriers. Both gp120 and gp41 specifically recognize glycosphingolipids galactosyl-ceramide (GalCer) or 3' sulfo-galactosyl-ceramide (GalS) present in the lipid rafts structures of epithelial cells. Binding to these alternative receptors allows the rapid transcytosis of the virus through the epithelial cells. This transcytotic vesicle-mediated transport of virions from the apical side to the basolateral side of the epithelial cells does not involve infection of the cells themselves (By similarity).</text>
</comment>
<comment type="subunit">
    <molecule>Surface protein gp120</molecule>
    <text evidence="1">The mature envelope protein (Env) consists of a homotrimer of non-covalently associated gp120-gp41 heterodimers. The resulting complex protrudes from the virus surface as a spike. Interacts with host CD4 and CCR5 (By similarity). Gp120 also interacts with the C-type lectins CD209/DC-SIGN and CLEC4M/DC-SIGNR (collectively referred to as DC-SIGN(R)).</text>
</comment>
<comment type="subunit">
    <molecule>Transmembrane protein gp41</molecule>
    <text evidence="1">The mature envelope protein (Env) consists of a homotrimer of non-covalently associated gp120-gp41 heterodimers. The resulting complex protrudes from the virus surface as a spike.</text>
</comment>
<comment type="subcellular location">
    <molecule>Transmembrane protein gp41</molecule>
    <subcellularLocation>
        <location evidence="1">Virion membrane</location>
        <topology evidence="1">Single-pass type I membrane protein</topology>
    </subcellularLocation>
    <subcellularLocation>
        <location evidence="1">Host cell membrane</location>
        <topology evidence="1">Single-pass type I membrane protein</topology>
    </subcellularLocation>
    <subcellularLocation>
        <location evidence="4">Host endosome membrane</location>
        <topology evidence="4">Single-pass type I membrane protein</topology>
    </subcellularLocation>
    <text evidence="1">It is probably concentrated at the site of budding and incorporated into the virions possibly by contacts between the cytoplasmic tail of Env and the N-terminus of Gag.</text>
</comment>
<comment type="subcellular location">
    <molecule>Surface protein gp120</molecule>
    <subcellularLocation>
        <location evidence="1">Virion membrane</location>
        <topology evidence="1">Peripheral membrane protein</topology>
    </subcellularLocation>
    <subcellularLocation>
        <location evidence="1">Host cell membrane</location>
        <topology evidence="1">Peripheral membrane protein</topology>
    </subcellularLocation>
    <subcellularLocation>
        <location evidence="4">Host endosome membrane</location>
        <topology evidence="4">Peripheral membrane protein</topology>
    </subcellularLocation>
    <text evidence="1">The surface protein is not anchored to the viral envelope, but associates with the extravirion surface through its binding to TM. It is probably concentrated at the site of budding and incorporated into the virions possibly by contacts between the cytoplasmic tail of Env and the N-terminus of Gag (By similarity).</text>
</comment>
<comment type="domain">
    <text evidence="1">Some of the most genetically diverse regions of the viral genome are present in Env. They are called variable regions 1 through 5 (V1 through V5) (By similarity).</text>
</comment>
<comment type="domain">
    <text evidence="1">The 17 amino acids long immunosuppressive region is present in many retroviral envelope proteins. Synthetic peptides derived from this relatively conserved sequence inhibit immune function in vitro and in vivo (By similarity).</text>
</comment>
<comment type="PTM">
    <text evidence="1">Specific enzymatic cleavages in vivo yield mature proteins. Envelope glycoproteins are synthesized as an inactive precursor that is heavily N-glycosylated and processed likely by host cell furin in the Golgi to yield the mature SU and TM proteins. The cleavage site between SU and TM requires the minimal sequence [KR]-X-[KR]-R (By similarity).</text>
</comment>
<comment type="PTM">
    <text evidence="1">Palmitoylation of the transmembrane protein and of Env polyprotein (prior to its proteolytic cleavage) is essential for their association with host cell membrane lipid rafts. Palmitoylation is therefore required for envelope trafficking to classical lipid rafts, but not for viral replication (By similarity).</text>
</comment>
<sequence>MGCLGNQLLIALLLLSASGIYCVQYVTVFYGIPAWRNATVPLFCATKNRDTWGTTQCLPDNGDYSELAINVTEAFDAWDNTVTEQAIEDVWNLFETSIKPCVKLTPLCITMRCNKSETDRWGLTGTPAPTTTQTTTTQASTTPTSPITAKVVNDSDPCIKINNCTGLEQEPMVSCKFNMTGLKRDKKREYNETWYSRDLVCEQNSNETDSKCYMNHCNTSVIQESCDKHYWDAIRFRYCAPPGYALLRCNDSNYSGFAPNCTKVVVSSCTRMMETQTSTWFGFNGTRAENRTYIYWHGRSNRTIISLNKYYNLTMRCRRPGNKTVLPVTIMSGLVFHSQPINERPKQAWCWFGGEWKKAIQEVKETLVKHPRYTGTNKTEQIKLTAPGGGDPEVTFMWTNCRGEFLYCKMNWFLNWVENIQNGSRWTSQNQKERQRRNYVPCHIRQIINTWHKVGKNVYLPPREGDLTCNSTVTSLIAEIDWINGNETNITMSAEVAELYRLELGDYKLVEITPIAFAPTSVKRYTTTGASRNKRGVFVLGFLGFLATAGSAMSAASVTLSAQSRTLLAGIVQQQQQLLDVVKRQQELLRLTVWGAKNLQTRVTAIEKYLKDQAQLNSWGCAFRQVCHTTVPRPNDTLTPNWNNMTWQEWEKQVNFLEANITQSLEEAQIQQEKNTYELQKLNSWDIFGNWFDLTSWIKYIQYGVLIVLGVIGLRIVIYVVQMLARLRQGYRPVFSSPPAYVQQIPIQTGQELPTKEGEEGDGGGRGGNRSWPWQIEYIHFLIRQLIRLLTWLFSSCRDWLLRNCQTLQPVLQSLSRTLQRAREVIRVQIAYLQYGWRYLQEAAQAWWKFVRETLASAWRDLWETLGRVGRGILAIPRRIRQGLELTLL</sequence>
<dbReference type="EMBL" id="M31325">
    <property type="protein sequence ID" value="AAA47757.1"/>
    <property type="molecule type" value="Genomic_RNA"/>
</dbReference>
<dbReference type="PDB" id="7LVB">
    <property type="method" value="X-ray"/>
    <property type="resolution" value="2.25 A"/>
    <property type="chains" value="A/B/C/D/E/F/G/H/I/J=185-198"/>
</dbReference>
<dbReference type="PDBsum" id="7LVB"/>
<dbReference type="SMR" id="P19503"/>
<dbReference type="GlyCosmos" id="P19503">
    <property type="glycosylation" value="25 sites, No reported glycans"/>
</dbReference>
<dbReference type="Proteomes" id="UP000007221">
    <property type="component" value="Segment"/>
</dbReference>
<dbReference type="GO" id="GO:0044175">
    <property type="term" value="C:host cell endosome membrane"/>
    <property type="evidence" value="ECO:0007669"/>
    <property type="project" value="UniProtKB-SubCell"/>
</dbReference>
<dbReference type="GO" id="GO:0020002">
    <property type="term" value="C:host cell plasma membrane"/>
    <property type="evidence" value="ECO:0007669"/>
    <property type="project" value="UniProtKB-SubCell"/>
</dbReference>
<dbReference type="GO" id="GO:0016020">
    <property type="term" value="C:membrane"/>
    <property type="evidence" value="ECO:0007669"/>
    <property type="project" value="UniProtKB-KW"/>
</dbReference>
<dbReference type="GO" id="GO:0019031">
    <property type="term" value="C:viral envelope"/>
    <property type="evidence" value="ECO:0007669"/>
    <property type="project" value="UniProtKB-KW"/>
</dbReference>
<dbReference type="GO" id="GO:0055036">
    <property type="term" value="C:virion membrane"/>
    <property type="evidence" value="ECO:0007669"/>
    <property type="project" value="UniProtKB-SubCell"/>
</dbReference>
<dbReference type="GO" id="GO:0005198">
    <property type="term" value="F:structural molecule activity"/>
    <property type="evidence" value="ECO:0007669"/>
    <property type="project" value="InterPro"/>
</dbReference>
<dbReference type="GO" id="GO:0039663">
    <property type="term" value="P:membrane fusion involved in viral entry into host cell"/>
    <property type="evidence" value="ECO:0007669"/>
    <property type="project" value="UniProtKB-KW"/>
</dbReference>
<dbReference type="GO" id="GO:0046718">
    <property type="term" value="P:symbiont entry into host cell"/>
    <property type="evidence" value="ECO:0007669"/>
    <property type="project" value="UniProtKB-KW"/>
</dbReference>
<dbReference type="GO" id="GO:0019062">
    <property type="term" value="P:virion attachment to host cell"/>
    <property type="evidence" value="ECO:0007669"/>
    <property type="project" value="UniProtKB-KW"/>
</dbReference>
<dbReference type="CDD" id="cd09909">
    <property type="entry name" value="HIV-1-like_HR1-HR2"/>
    <property type="match status" value="1"/>
</dbReference>
<dbReference type="Gene3D" id="1.10.287.210">
    <property type="match status" value="1"/>
</dbReference>
<dbReference type="Gene3D" id="2.170.40.20">
    <property type="entry name" value="Human immunodeficiency virus 1, Gp160, envelope glycoprotein"/>
    <property type="match status" value="2"/>
</dbReference>
<dbReference type="InterPro" id="IPR036377">
    <property type="entry name" value="Gp120_core_sf"/>
</dbReference>
<dbReference type="InterPro" id="IPR000328">
    <property type="entry name" value="GP41-like"/>
</dbReference>
<dbReference type="InterPro" id="IPR000777">
    <property type="entry name" value="HIV1_Gp120"/>
</dbReference>
<dbReference type="Pfam" id="PF00516">
    <property type="entry name" value="GP120"/>
    <property type="match status" value="1"/>
</dbReference>
<dbReference type="Pfam" id="PF00517">
    <property type="entry name" value="GP41"/>
    <property type="match status" value="1"/>
</dbReference>
<dbReference type="SUPFAM" id="SSF56502">
    <property type="entry name" value="gp120 core"/>
    <property type="match status" value="1"/>
</dbReference>
<dbReference type="SUPFAM" id="SSF58069">
    <property type="entry name" value="Virus ectodomain"/>
    <property type="match status" value="1"/>
</dbReference>
<name>ENV_SIVSP</name>